<feature type="chain" id="PRO_0000314666" description="Sodium/hydrogen exchanger 4">
    <location>
        <begin position="1"/>
        <end position="797"/>
    </location>
</feature>
<feature type="topological domain" description="Cytoplasmic" evidence="4">
    <location>
        <begin position="1"/>
        <end position="13"/>
    </location>
</feature>
<feature type="intramembrane region" description="Name=A/M1" evidence="4">
    <location>
        <begin position="14"/>
        <end position="28"/>
    </location>
</feature>
<feature type="topological domain" description="Cytoplasmic" evidence="4">
    <location>
        <begin position="29"/>
        <end position="69"/>
    </location>
</feature>
<feature type="intramembrane region" description="Name=B/M2" evidence="4">
    <location>
        <begin position="70"/>
        <end position="90"/>
    </location>
</feature>
<feature type="topological domain" description="Cytoplasmic" evidence="4">
    <location>
        <begin position="91"/>
        <end position="94"/>
    </location>
</feature>
<feature type="transmembrane region" description="Helical; Name=C/M3" evidence="4">
    <location>
        <begin position="95"/>
        <end position="114"/>
    </location>
</feature>
<feature type="topological domain" description="Extracellular" evidence="4">
    <location>
        <begin position="115"/>
        <end position="127"/>
    </location>
</feature>
<feature type="transmembrane region" description="Helical; Name=D/M4" evidence="4">
    <location>
        <begin position="128"/>
        <end position="148"/>
    </location>
</feature>
<feature type="topological domain" description="Cytoplasmic" evidence="4">
    <location>
        <begin position="149"/>
        <end position="154"/>
    </location>
</feature>
<feature type="transmembrane region" description="Helical; Name=E/M5" evidence="4">
    <location>
        <begin position="155"/>
        <end position="175"/>
    </location>
</feature>
<feature type="topological domain" description="Extracellular" evidence="4">
    <location>
        <begin position="176"/>
        <end position="194"/>
    </location>
</feature>
<feature type="transmembrane region" description="Helical; Name=F/M5A" evidence="4">
    <location>
        <begin position="195"/>
        <end position="215"/>
    </location>
</feature>
<feature type="topological domain" description="Cytoplasmic" evidence="4">
    <location>
        <begin position="216"/>
        <end position="226"/>
    </location>
</feature>
<feature type="transmembrane region" description="Helical; Name=G/M5B" evidence="4">
    <location>
        <begin position="227"/>
        <end position="247"/>
    </location>
</feature>
<feature type="topological domain" description="Extracellular" evidence="4">
    <location>
        <begin position="248"/>
        <end position="270"/>
    </location>
</feature>
<feature type="transmembrane region" description="Helical; Name=H/M6" evidence="4">
    <location>
        <begin position="271"/>
        <end position="291"/>
    </location>
</feature>
<feature type="topological domain" description="Cytoplasmic" evidence="4">
    <location>
        <begin position="292"/>
        <end position="304"/>
    </location>
</feature>
<feature type="transmembrane region" description="Helical; Name=I/M7" evidence="4">
    <location>
        <begin position="305"/>
        <end position="325"/>
    </location>
</feature>
<feature type="topological domain" description="Extracellular" evidence="4">
    <location>
        <begin position="326"/>
        <end position="352"/>
    </location>
</feature>
<feature type="transmembrane region" description="Helical; Name=J/M8" evidence="4">
    <location>
        <begin position="353"/>
        <end position="373"/>
    </location>
</feature>
<feature type="topological domain" description="Cytoplasmic" evidence="4">
    <location>
        <begin position="374"/>
        <end position="384"/>
    </location>
</feature>
<feature type="transmembrane region" description="Helical; Name=K/M9" evidence="4">
    <location>
        <begin position="385"/>
        <end position="405"/>
    </location>
</feature>
<feature type="topological domain" description="Extracellular" evidence="4">
    <location>
        <begin position="406"/>
        <end position="420"/>
    </location>
</feature>
<feature type="intramembrane region" description="Name=L" evidence="4">
    <location>
        <begin position="421"/>
        <end position="441"/>
    </location>
</feature>
<feature type="topological domain" description="Extracellular" evidence="4">
    <location>
        <begin position="442"/>
        <end position="450"/>
    </location>
</feature>
<feature type="transmembrane region" description="Helical; Name=M/M10" evidence="4">
    <location>
        <begin position="451"/>
        <end position="471"/>
    </location>
</feature>
<feature type="topological domain" description="Cytoplasmic" evidence="4">
    <location>
        <begin position="472"/>
        <end position="797"/>
    </location>
</feature>
<feature type="region of interest" description="Disordered" evidence="5">
    <location>
        <begin position="32"/>
        <end position="52"/>
    </location>
</feature>
<feature type="region of interest" description="Disordered" evidence="5">
    <location>
        <begin position="759"/>
        <end position="797"/>
    </location>
</feature>
<feature type="compositionally biased region" description="Acidic residues" evidence="5">
    <location>
        <begin position="759"/>
        <end position="769"/>
    </location>
</feature>
<feature type="compositionally biased region" description="Basic residues" evidence="5">
    <location>
        <begin position="783"/>
        <end position="797"/>
    </location>
</feature>
<feature type="glycosylation site" description="N-linked (GlcNAc...) asparagine" evidence="4">
    <location>
        <position position="342"/>
    </location>
</feature>
<keyword id="KW-0050">Antiport</keyword>
<keyword id="KW-1003">Cell membrane</keyword>
<keyword id="KW-0968">Cytoplasmic vesicle</keyword>
<keyword id="KW-0325">Glycoprotein</keyword>
<keyword id="KW-0406">Ion transport</keyword>
<keyword id="KW-0472">Membrane</keyword>
<keyword id="KW-0597">Phosphoprotein</keyword>
<keyword id="KW-1185">Reference proteome</keyword>
<keyword id="KW-0915">Sodium</keyword>
<keyword id="KW-0739">Sodium transport</keyword>
<keyword id="KW-0812">Transmembrane</keyword>
<keyword id="KW-1133">Transmembrane helix</keyword>
<keyword id="KW-0813">Transport</keyword>
<gene>
    <name type="primary">Slc9a4</name>
    <name type="synonym">Nhe4</name>
</gene>
<name>SL9A4_MOUSE</name>
<evidence type="ECO:0000250" key="1"/>
<evidence type="ECO:0000250" key="2">
    <source>
        <dbReference type="UniProtKB" id="P19634"/>
    </source>
</evidence>
<evidence type="ECO:0000250" key="3">
    <source>
        <dbReference type="UniProtKB" id="P26434"/>
    </source>
</evidence>
<evidence type="ECO:0000255" key="4"/>
<evidence type="ECO:0000256" key="5">
    <source>
        <dbReference type="SAM" id="MobiDB-lite"/>
    </source>
</evidence>
<evidence type="ECO:0000269" key="6">
    <source>
    </source>
</evidence>
<evidence type="ECO:0000269" key="7">
    <source>
    </source>
</evidence>
<evidence type="ECO:0000269" key="8">
    <source>
    </source>
</evidence>
<evidence type="ECO:0000269" key="9">
    <source>
    </source>
</evidence>
<evidence type="ECO:0000269" key="10">
    <source>
    </source>
</evidence>
<evidence type="ECO:0000305" key="11"/>
<evidence type="ECO:0000305" key="12">
    <source>
    </source>
</evidence>
<evidence type="ECO:0000305" key="13">
    <source>
    </source>
</evidence>
<evidence type="ECO:0000305" key="14">
    <source>
    </source>
</evidence>
<dbReference type="EMBL" id="AK085681">
    <property type="protein sequence ID" value="BAC39504.1"/>
    <property type="molecule type" value="mRNA"/>
</dbReference>
<dbReference type="EMBL" id="AK141534">
    <property type="protein sequence ID" value="BAE24721.1"/>
    <property type="molecule type" value="mRNA"/>
</dbReference>
<dbReference type="EMBL" id="AK170522">
    <property type="protein sequence ID" value="BAE41856.1"/>
    <property type="molecule type" value="mRNA"/>
</dbReference>
<dbReference type="EMBL" id="BC120543">
    <property type="protein sequence ID" value="AAI20544.1"/>
    <property type="molecule type" value="mRNA"/>
</dbReference>
<dbReference type="EMBL" id="AF139195">
    <property type="protein sequence ID" value="AAD30297.1"/>
    <property type="molecule type" value="mRNA"/>
</dbReference>
<dbReference type="CCDS" id="CCDS14913.1"/>
<dbReference type="RefSeq" id="NP_796058.1">
    <property type="nucleotide sequence ID" value="NM_177084.4"/>
</dbReference>
<dbReference type="SMR" id="Q8BUE1"/>
<dbReference type="BioGRID" id="225997">
    <property type="interactions" value="1"/>
</dbReference>
<dbReference type="FunCoup" id="Q8BUE1">
    <property type="interactions" value="98"/>
</dbReference>
<dbReference type="STRING" id="10090.ENSMUSP00000027233"/>
<dbReference type="GlyCosmos" id="Q8BUE1">
    <property type="glycosylation" value="1 site, No reported glycans"/>
</dbReference>
<dbReference type="GlyGen" id="Q8BUE1">
    <property type="glycosylation" value="1 site"/>
</dbReference>
<dbReference type="iPTMnet" id="Q8BUE1"/>
<dbReference type="PhosphoSitePlus" id="Q8BUE1"/>
<dbReference type="PaxDb" id="10090-ENSMUSP00000027233"/>
<dbReference type="ProteomicsDB" id="257194"/>
<dbReference type="Antibodypedia" id="49172">
    <property type="antibodies" value="11 antibodies from 6 providers"/>
</dbReference>
<dbReference type="DNASU" id="110895"/>
<dbReference type="Ensembl" id="ENSMUST00000027233.9">
    <property type="protein sequence ID" value="ENSMUSP00000027233.8"/>
    <property type="gene ID" value="ENSMUSG00000026065.9"/>
</dbReference>
<dbReference type="GeneID" id="110895"/>
<dbReference type="KEGG" id="mmu:110895"/>
<dbReference type="UCSC" id="uc007aul.1">
    <property type="organism name" value="mouse"/>
</dbReference>
<dbReference type="AGR" id="MGI:105074"/>
<dbReference type="CTD" id="389015"/>
<dbReference type="MGI" id="MGI:105074">
    <property type="gene designation" value="Slc9a4"/>
</dbReference>
<dbReference type="VEuPathDB" id="HostDB:ENSMUSG00000026065"/>
<dbReference type="eggNOG" id="KOG1966">
    <property type="taxonomic scope" value="Eukaryota"/>
</dbReference>
<dbReference type="GeneTree" id="ENSGT00940000160774"/>
<dbReference type="HOGENOM" id="CLU_005912_4_3_1"/>
<dbReference type="InParanoid" id="Q8BUE1"/>
<dbReference type="OMA" id="TFSPWNC"/>
<dbReference type="OrthoDB" id="196264at2759"/>
<dbReference type="PhylomeDB" id="Q8BUE1"/>
<dbReference type="TreeFam" id="TF317212"/>
<dbReference type="Reactome" id="R-MMU-425986">
    <property type="pathway name" value="Sodium/Proton exchangers"/>
</dbReference>
<dbReference type="BioGRID-ORCS" id="110895">
    <property type="hits" value="3 hits in 76 CRISPR screens"/>
</dbReference>
<dbReference type="PRO" id="PR:Q8BUE1"/>
<dbReference type="Proteomes" id="UP000000589">
    <property type="component" value="Chromosome 1"/>
</dbReference>
<dbReference type="RNAct" id="Q8BUE1">
    <property type="molecule type" value="protein"/>
</dbReference>
<dbReference type="Bgee" id="ENSMUSG00000026065">
    <property type="expression patterns" value="Expressed in stomach and 36 other cell types or tissues"/>
</dbReference>
<dbReference type="GO" id="GO:0016324">
    <property type="term" value="C:apical plasma membrane"/>
    <property type="evidence" value="ECO:0007669"/>
    <property type="project" value="UniProtKB-SubCell"/>
</dbReference>
<dbReference type="GO" id="GO:0016323">
    <property type="term" value="C:basolateral plasma membrane"/>
    <property type="evidence" value="ECO:0000250"/>
    <property type="project" value="UniProtKB"/>
</dbReference>
<dbReference type="GO" id="GO:0042589">
    <property type="term" value="C:zymogen granule membrane"/>
    <property type="evidence" value="ECO:0007669"/>
    <property type="project" value="UniProtKB-SubCell"/>
</dbReference>
<dbReference type="GO" id="GO:0015385">
    <property type="term" value="F:sodium:proton antiporter activity"/>
    <property type="evidence" value="ECO:0000250"/>
    <property type="project" value="UniProtKB"/>
</dbReference>
<dbReference type="GO" id="GO:0001696">
    <property type="term" value="P:gastric acid secretion"/>
    <property type="evidence" value="ECO:0000315"/>
    <property type="project" value="MGI"/>
</dbReference>
<dbReference type="GO" id="GO:0002068">
    <property type="term" value="P:glandular epithelial cell development"/>
    <property type="evidence" value="ECO:0000315"/>
    <property type="project" value="MGI"/>
</dbReference>
<dbReference type="GO" id="GO:0006885">
    <property type="term" value="P:regulation of pH"/>
    <property type="evidence" value="ECO:0007669"/>
    <property type="project" value="InterPro"/>
</dbReference>
<dbReference type="GO" id="GO:0070634">
    <property type="term" value="P:transepithelial ammonium transport"/>
    <property type="evidence" value="ECO:0000315"/>
    <property type="project" value="UniProtKB"/>
</dbReference>
<dbReference type="Gene3D" id="6.10.140.1330">
    <property type="match status" value="1"/>
</dbReference>
<dbReference type="Gene3D" id="6.10.250.1040">
    <property type="match status" value="1"/>
</dbReference>
<dbReference type="Gene3D" id="6.10.250.2020">
    <property type="match status" value="1"/>
</dbReference>
<dbReference type="InterPro" id="IPR018422">
    <property type="entry name" value="Cation/H_exchanger_CPA1"/>
</dbReference>
<dbReference type="InterPro" id="IPR006153">
    <property type="entry name" value="Cation/H_exchanger_TM"/>
</dbReference>
<dbReference type="InterPro" id="IPR004709">
    <property type="entry name" value="NaH_exchanger"/>
</dbReference>
<dbReference type="InterPro" id="IPR001953">
    <property type="entry name" value="NHE-2/4"/>
</dbReference>
<dbReference type="InterPro" id="IPR032103">
    <property type="entry name" value="NHE_CaM-bd"/>
</dbReference>
<dbReference type="NCBIfam" id="TIGR00840">
    <property type="entry name" value="b_cpa1"/>
    <property type="match status" value="1"/>
</dbReference>
<dbReference type="PANTHER" id="PTHR10110">
    <property type="entry name" value="SODIUM/HYDROGEN EXCHANGER"/>
    <property type="match status" value="1"/>
</dbReference>
<dbReference type="PANTHER" id="PTHR10110:SF103">
    <property type="entry name" value="SODIUM_HYDROGEN EXCHANGER 4"/>
    <property type="match status" value="1"/>
</dbReference>
<dbReference type="Pfam" id="PF00999">
    <property type="entry name" value="Na_H_Exchanger"/>
    <property type="match status" value="1"/>
</dbReference>
<dbReference type="Pfam" id="PF16644">
    <property type="entry name" value="NEXCaM_BD"/>
    <property type="match status" value="1"/>
</dbReference>
<dbReference type="PRINTS" id="PR01084">
    <property type="entry name" value="NAHEXCHNGR"/>
</dbReference>
<dbReference type="PRINTS" id="PR01086">
    <property type="entry name" value="NAHEXCHNGR2"/>
</dbReference>
<sequence length="797" mass="90937">MGPAMFMAFRLWNWLLLLAVLTRSEATSYVNESSNPTAQQAPDARFAASSSDPDEGISVFELDYDYVQIPYEVTLWILLASLAKIGFHLYHRLPHLMPESCLLIIVGALVGGIIFGTHHKSPPVMDSSIYFLYLLPPIVLESGYFMPTRPFFENIGSILWWAGLGALINAFGIGLSLYFICQIKAFGLGDINLLHNLLFGSLISAVDPVAVLAVFEEARVNEQLYMMIFGEALLNDGISVVLYNILIAFTKMHKFEDIEAVDILAGCARFVIVGCGGVFFGIIFGFISAFITRFTQNISAIEPLIVFMFSYLSYLAAETLYLSGILAITACAVTMKKYVEENVSQTSYTTIKYFMKMLSSVSETLIFIFMGVSTIGKNHEWNWAFICFTLLFCQIWRAISVFTLFYVSNQFRTFPFSIKDQFIIFYSGVRGAGSFSLAFLLPLSLFPRKKLFVTATLVVTYFTVFFQGITIGPLVRYLDVRKTNKKESINEELHSRLMDHLKAGIEDVCGQWSHYQVRDKFKKFDHRYLRKILIRRNLPKSSIVSLYKKLEMKQAIEMVETGILSSVASPTPYQSERIQGIKRLSPEDVESMRDILTRSMYQVRQRTLSYNKYNLKPQTSEKQAKEILIRRQNTLRESMRKGQSLPWGKPAGTKNFRYLSFPYSNPQAARREARAAEPTDDDGTDSGFQPLMFSIHSRAGSLQERRQTQAVIPMKRLQRGEKALSFSYRSNTSWEDQAGWRRMDVLRPKPLFYAVAEEYDSGEQTEEETSAILSRWTAEHRHSTEHHKSHSPLLHRK</sequence>
<proteinExistence type="evidence at protein level"/>
<comment type="function">
    <text evidence="7 8 9">Electroneutral antiporter that exchanges sodium for protons or ammonium ions at the basolateral membrane of epithelia to regulate cell volume and intracellular pH upon hypertonic conditions (PubMed:15684419, PubMed:20484819). As part of transcellular ammonia transport in renal tubules, mediates basolateral ammonium extrusion in the medullary thick ascending limb, regulating the corticopapillary ammonium gradient and overall renal acid excretion (PubMed:20484819). Mediates sodium:proton exchange in gastric parietal cells secondary to cAMP-dependent acid secretion and hyperosmolarity. Possibly coupled to chloride:bicarbonate antiporter, enables loading of parietal cells with sodium and chloride ions to maintain cell volume and normal gastric acid secretion (PubMed:15684419). Functions as a sodium sensor in neurons of organum vasculosum of the lamina terminalis where it regulates water intake in response to increased sodium concentration in body fluids (PubMed:32372285).</text>
</comment>
<comment type="catalytic activity">
    <reaction evidence="13 14">
        <text>Na(+)(in) + H(+)(out) = Na(+)(out) + H(+)(in)</text>
        <dbReference type="Rhea" id="RHEA:29419"/>
        <dbReference type="ChEBI" id="CHEBI:15378"/>
        <dbReference type="ChEBI" id="CHEBI:29101"/>
    </reaction>
    <physiologicalReaction direction="right-to-left" evidence="13 14">
        <dbReference type="Rhea" id="RHEA:29421"/>
    </physiologicalReaction>
</comment>
<comment type="catalytic activity">
    <reaction evidence="13">
        <text>Na(+)(out) + NH4(+)(in) = Na(+)(in) + NH4(+)(out)</text>
        <dbReference type="Rhea" id="RHEA:76431"/>
        <dbReference type="ChEBI" id="CHEBI:28938"/>
        <dbReference type="ChEBI" id="CHEBI:29101"/>
    </reaction>
    <physiologicalReaction direction="left-to-right" evidence="13">
        <dbReference type="Rhea" id="RHEA:76432"/>
    </physiologicalReaction>
</comment>
<comment type="activity regulation">
    <text evidence="9">Up-regulated in response to high extracellular sodium concentration.</text>
</comment>
<comment type="subunit">
    <text evidence="2 3">Homodimer; each protomer has one site for sodium and one site for proton binding (By similarity). Interacts with CHP1 and CHP2 (By similarity).</text>
</comment>
<comment type="subcellular location">
    <subcellularLocation>
        <location evidence="6">Basolateral cell membrane</location>
        <topology evidence="4">Multi-pass membrane protein</topology>
    </subcellularLocation>
    <subcellularLocation>
        <location evidence="6">Apical cell membrane</location>
        <topology evidence="4">Multi-pass membrane protein</topology>
    </subcellularLocation>
    <subcellularLocation>
        <location evidence="3">Zymogen granule membrane</location>
        <topology evidence="4">Multi-pass membrane protein</topology>
    </subcellularLocation>
    <text evidence="12">Enrichment at apical or basolateral membrane may be tissue-dependent.</text>
</comment>
<comment type="tissue specificity">
    <text evidence="6 9 10">Expressed in kidney. Expressed in uterus and endometrial epithelial cells. Expressed in the inner segments of inner medullary collecting ducts (IMCD) in kidney. Expressed in AGTR1-positive neurons in organum vasculosum of the lamina terminalis (at protein level).</text>
</comment>
<comment type="induction">
    <text evidence="8">Up-regulated upon metabolic acidosis.</text>
</comment>
<comment type="PTM">
    <text evidence="1">May be phosphorylated.</text>
</comment>
<comment type="disruption phenotype">
    <text evidence="7 8">Mice are born at the expected Mendelian rate. They display lack of renal adaptation to metabolic acidosis marked by impaired medullary ammonia accumulation and inability to increase urinary net acid excretion to recover from acidosis. They show major morphological changes in the gastric mucosa associated with decreased numbers of gastric parietal cells and hypochlorhydria.</text>
</comment>
<comment type="similarity">
    <text evidence="11">Belongs to the monovalent cation:proton antiporter 1 (CPA1) transporter (TC 2.A.36) family.</text>
</comment>
<comment type="caution">
    <text evidence="11">The number, localization and denomination of hydrophobic domains in the Na(+)/H(+) exchangers vary among authors.</text>
</comment>
<accession>Q8BUE1</accession>
<accession>Q3TCU9</accession>
<accession>Q9WUJ6</accession>
<reference key="1">
    <citation type="journal article" date="2005" name="Science">
        <title>The transcriptional landscape of the mammalian genome.</title>
        <authorList>
            <person name="Carninci P."/>
            <person name="Kasukawa T."/>
            <person name="Katayama S."/>
            <person name="Gough J."/>
            <person name="Frith M.C."/>
            <person name="Maeda N."/>
            <person name="Oyama R."/>
            <person name="Ravasi T."/>
            <person name="Lenhard B."/>
            <person name="Wells C."/>
            <person name="Kodzius R."/>
            <person name="Shimokawa K."/>
            <person name="Bajic V.B."/>
            <person name="Brenner S.E."/>
            <person name="Batalov S."/>
            <person name="Forrest A.R."/>
            <person name="Zavolan M."/>
            <person name="Davis M.J."/>
            <person name="Wilming L.G."/>
            <person name="Aidinis V."/>
            <person name="Allen J.E."/>
            <person name="Ambesi-Impiombato A."/>
            <person name="Apweiler R."/>
            <person name="Aturaliya R.N."/>
            <person name="Bailey T.L."/>
            <person name="Bansal M."/>
            <person name="Baxter L."/>
            <person name="Beisel K.W."/>
            <person name="Bersano T."/>
            <person name="Bono H."/>
            <person name="Chalk A.M."/>
            <person name="Chiu K.P."/>
            <person name="Choudhary V."/>
            <person name="Christoffels A."/>
            <person name="Clutterbuck D.R."/>
            <person name="Crowe M.L."/>
            <person name="Dalla E."/>
            <person name="Dalrymple B.P."/>
            <person name="de Bono B."/>
            <person name="Della Gatta G."/>
            <person name="di Bernardo D."/>
            <person name="Down T."/>
            <person name="Engstrom P."/>
            <person name="Fagiolini M."/>
            <person name="Faulkner G."/>
            <person name="Fletcher C.F."/>
            <person name="Fukushima T."/>
            <person name="Furuno M."/>
            <person name="Futaki S."/>
            <person name="Gariboldi M."/>
            <person name="Georgii-Hemming P."/>
            <person name="Gingeras T.R."/>
            <person name="Gojobori T."/>
            <person name="Green R.E."/>
            <person name="Gustincich S."/>
            <person name="Harbers M."/>
            <person name="Hayashi Y."/>
            <person name="Hensch T.K."/>
            <person name="Hirokawa N."/>
            <person name="Hill D."/>
            <person name="Huminiecki L."/>
            <person name="Iacono M."/>
            <person name="Ikeo K."/>
            <person name="Iwama A."/>
            <person name="Ishikawa T."/>
            <person name="Jakt M."/>
            <person name="Kanapin A."/>
            <person name="Katoh M."/>
            <person name="Kawasawa Y."/>
            <person name="Kelso J."/>
            <person name="Kitamura H."/>
            <person name="Kitano H."/>
            <person name="Kollias G."/>
            <person name="Krishnan S.P."/>
            <person name="Kruger A."/>
            <person name="Kummerfeld S.K."/>
            <person name="Kurochkin I.V."/>
            <person name="Lareau L.F."/>
            <person name="Lazarevic D."/>
            <person name="Lipovich L."/>
            <person name="Liu J."/>
            <person name="Liuni S."/>
            <person name="McWilliam S."/>
            <person name="Madan Babu M."/>
            <person name="Madera M."/>
            <person name="Marchionni L."/>
            <person name="Matsuda H."/>
            <person name="Matsuzawa S."/>
            <person name="Miki H."/>
            <person name="Mignone F."/>
            <person name="Miyake S."/>
            <person name="Morris K."/>
            <person name="Mottagui-Tabar S."/>
            <person name="Mulder N."/>
            <person name="Nakano N."/>
            <person name="Nakauchi H."/>
            <person name="Ng P."/>
            <person name="Nilsson R."/>
            <person name="Nishiguchi S."/>
            <person name="Nishikawa S."/>
            <person name="Nori F."/>
            <person name="Ohara O."/>
            <person name="Okazaki Y."/>
            <person name="Orlando V."/>
            <person name="Pang K.C."/>
            <person name="Pavan W.J."/>
            <person name="Pavesi G."/>
            <person name="Pesole G."/>
            <person name="Petrovsky N."/>
            <person name="Piazza S."/>
            <person name="Reed J."/>
            <person name="Reid J.F."/>
            <person name="Ring B.Z."/>
            <person name="Ringwald M."/>
            <person name="Rost B."/>
            <person name="Ruan Y."/>
            <person name="Salzberg S.L."/>
            <person name="Sandelin A."/>
            <person name="Schneider C."/>
            <person name="Schoenbach C."/>
            <person name="Sekiguchi K."/>
            <person name="Semple C.A."/>
            <person name="Seno S."/>
            <person name="Sessa L."/>
            <person name="Sheng Y."/>
            <person name="Shibata Y."/>
            <person name="Shimada H."/>
            <person name="Shimada K."/>
            <person name="Silva D."/>
            <person name="Sinclair B."/>
            <person name="Sperling S."/>
            <person name="Stupka E."/>
            <person name="Sugiura K."/>
            <person name="Sultana R."/>
            <person name="Takenaka Y."/>
            <person name="Taki K."/>
            <person name="Tammoja K."/>
            <person name="Tan S.L."/>
            <person name="Tang S."/>
            <person name="Taylor M.S."/>
            <person name="Tegner J."/>
            <person name="Teichmann S.A."/>
            <person name="Ueda H.R."/>
            <person name="van Nimwegen E."/>
            <person name="Verardo R."/>
            <person name="Wei C.L."/>
            <person name="Yagi K."/>
            <person name="Yamanishi H."/>
            <person name="Zabarovsky E."/>
            <person name="Zhu S."/>
            <person name="Zimmer A."/>
            <person name="Hide W."/>
            <person name="Bult C."/>
            <person name="Grimmond S.M."/>
            <person name="Teasdale R.D."/>
            <person name="Liu E.T."/>
            <person name="Brusic V."/>
            <person name="Quackenbush J."/>
            <person name="Wahlestedt C."/>
            <person name="Mattick J.S."/>
            <person name="Hume D.A."/>
            <person name="Kai C."/>
            <person name="Sasaki D."/>
            <person name="Tomaru Y."/>
            <person name="Fukuda S."/>
            <person name="Kanamori-Katayama M."/>
            <person name="Suzuki M."/>
            <person name="Aoki J."/>
            <person name="Arakawa T."/>
            <person name="Iida J."/>
            <person name="Imamura K."/>
            <person name="Itoh M."/>
            <person name="Kato T."/>
            <person name="Kawaji H."/>
            <person name="Kawagashira N."/>
            <person name="Kawashima T."/>
            <person name="Kojima M."/>
            <person name="Kondo S."/>
            <person name="Konno H."/>
            <person name="Nakano K."/>
            <person name="Ninomiya N."/>
            <person name="Nishio T."/>
            <person name="Okada M."/>
            <person name="Plessy C."/>
            <person name="Shibata K."/>
            <person name="Shiraki T."/>
            <person name="Suzuki S."/>
            <person name="Tagami M."/>
            <person name="Waki K."/>
            <person name="Watahiki A."/>
            <person name="Okamura-Oho Y."/>
            <person name="Suzuki H."/>
            <person name="Kawai J."/>
            <person name="Hayashizaki Y."/>
        </authorList>
    </citation>
    <scope>NUCLEOTIDE SEQUENCE [LARGE SCALE MRNA]</scope>
    <source>
        <strain>C57BL/6J</strain>
        <tissue>Hippocampus</tissue>
        <tissue>Mammary gland</tissue>
    </source>
</reference>
<reference key="2">
    <citation type="journal article" date="2004" name="Genome Res.">
        <title>The status, quality, and expansion of the NIH full-length cDNA project: the Mammalian Gene Collection (MGC).</title>
        <authorList>
            <consortium name="The MGC Project Team"/>
        </authorList>
    </citation>
    <scope>NUCLEOTIDE SEQUENCE [LARGE SCALE MRNA]</scope>
    <source>
        <tissue>Brain</tissue>
    </source>
</reference>
<reference key="3">
    <citation type="journal article" date="2000" name="Am. J. Physiol.">
        <title>NHE1, NHE2, and NHE3 contribute to regulation of intracellular pH in murine duodenal epithelial cells.</title>
        <authorList>
            <person name="Praetorius J."/>
            <person name="Andreasen D."/>
            <person name="Jensen B.L."/>
            <person name="Ainsworth M.A."/>
            <person name="Friis U.G."/>
            <person name="Johansen T."/>
        </authorList>
    </citation>
    <scope>NUCLEOTIDE SEQUENCE [MRNA] OF 304-498</scope>
    <source>
        <strain>C57BL/6J</strain>
        <tissue>Kidney</tissue>
    </source>
</reference>
<reference key="4">
    <citation type="journal article" date="1998" name="J. Membr. Biol.">
        <title>Expression of Na+/H+ exchanger isoforms in inner segment of inner medullary collecting duct.</title>
        <authorList>
            <person name="Sun A.M."/>
            <person name="Liu Y."/>
            <person name="Centracchio J."/>
            <person name="Dworkin L.D."/>
        </authorList>
    </citation>
    <scope>TISSUE SPECIFICITY</scope>
</reference>
<reference key="5">
    <citation type="journal article" date="2002" name="Am. J. Physiol.">
        <title>Expression of isoforms of the Na(+)/H(+) exchanger in M-1 mouse cortical collecting duct cells.</title>
        <authorList>
            <person name="Hill C."/>
            <person name="Giesberts A.N."/>
            <person name="White S.J."/>
        </authorList>
    </citation>
    <scope>SPECIFICITY</scope>
</reference>
<reference key="6">
    <citation type="journal article" date="2003" name="Biol. Reprod.">
        <title>Expression, immunolocalization, and functional activity of Na+/H+ exchanger isoforms in mouse endometrial epithelium.</title>
        <authorList>
            <person name="Wang X.F."/>
            <person name="Yu M.K."/>
            <person name="Lam S.Y."/>
            <person name="Leung K.M."/>
            <person name="Jiang J.L."/>
            <person name="Leung P.S."/>
            <person name="Ko W.H."/>
            <person name="Leung P.Y."/>
            <person name="Chew S.B.C."/>
            <person name="Liu C.Q."/>
            <person name="Tse C.M."/>
            <person name="Chan H.C."/>
        </authorList>
    </citation>
    <scope>SUBCELLULAR LOCATION</scope>
    <scope>TISSUE SPECIFICITY</scope>
</reference>
<reference key="7">
    <citation type="journal article" date="2005" name="J. Biol. Chem.">
        <title>Impaired gastric acid secretion in mice with a targeted disruption of the NHE4 Na+/H+ exchanger.</title>
        <authorList>
            <person name="Gawenis L.R."/>
            <person name="Greeb J.M."/>
            <person name="Prasad V."/>
            <person name="Grisham C."/>
            <person name="Sanford L.P."/>
            <person name="Doetschman T."/>
            <person name="Andringa A."/>
            <person name="Miller M.L."/>
            <person name="Shull G.E."/>
        </authorList>
    </citation>
    <scope>FUNCTION</scope>
    <scope>DISRUPTION PHENOTYPE</scope>
</reference>
<reference key="8">
    <citation type="journal article" date="2010" name="J. Clin. Invest.">
        <title>NHE4 is critical for the renal handling of ammonia in rodents.</title>
        <authorList>
            <person name="Bourgeois S."/>
            <person name="Meer L.V."/>
            <person name="Wootla B."/>
            <person name="Bloch-Faure M."/>
            <person name="Chambrey R."/>
            <person name="Shull G.E."/>
            <person name="Gawenis L.R."/>
            <person name="Houillier P."/>
        </authorList>
    </citation>
    <scope>FUNCTION</scope>
    <scope>TRANSPORTER ACTIVITY</scope>
    <scope>INDUCTION</scope>
    <scope>DISRUPTION PHENOTYPE</scope>
</reference>
<reference key="9">
    <citation type="journal article" date="2020" name="Pflugers Arch.">
        <title>SLC9A4 in the organum vasculosum of the lamina terminalis is a [Na+] sensor for the control of water intake.</title>
        <authorList>
            <person name="Sakuta H."/>
            <person name="Lin C.H."/>
            <person name="Hiyama T.Y."/>
            <person name="Matsuda T."/>
            <person name="Yamaguchi K."/>
            <person name="Shigenobu S."/>
            <person name="Kobayashi K."/>
            <person name="Noda M."/>
        </authorList>
    </citation>
    <scope>FUNCTION</scope>
    <scope>TRANSPORTER ACTIVITY</scope>
    <scope>ACTIVITY REGULATION</scope>
    <scope>TISSUE SPECIFICITY</scope>
</reference>
<organism>
    <name type="scientific">Mus musculus</name>
    <name type="common">Mouse</name>
    <dbReference type="NCBI Taxonomy" id="10090"/>
    <lineage>
        <taxon>Eukaryota</taxon>
        <taxon>Metazoa</taxon>
        <taxon>Chordata</taxon>
        <taxon>Craniata</taxon>
        <taxon>Vertebrata</taxon>
        <taxon>Euteleostomi</taxon>
        <taxon>Mammalia</taxon>
        <taxon>Eutheria</taxon>
        <taxon>Euarchontoglires</taxon>
        <taxon>Glires</taxon>
        <taxon>Rodentia</taxon>
        <taxon>Myomorpha</taxon>
        <taxon>Muroidea</taxon>
        <taxon>Muridae</taxon>
        <taxon>Murinae</taxon>
        <taxon>Mus</taxon>
        <taxon>Mus</taxon>
    </lineage>
</organism>
<protein>
    <recommendedName>
        <fullName>Sodium/hydrogen exchanger 4</fullName>
    </recommendedName>
    <alternativeName>
        <fullName>Na(+)/H(+) exchanger 4</fullName>
        <shortName>NHE-4</shortName>
    </alternativeName>
    <alternativeName>
        <fullName>Solute carrier family 9 member 4</fullName>
    </alternativeName>
</protein>